<accession>Q3BN25</accession>
<organism>
    <name type="scientific">Xanthomonas euvesicatoria pv. vesicatoria (strain 85-10)</name>
    <name type="common">Xanthomonas campestris pv. vesicatoria</name>
    <dbReference type="NCBI Taxonomy" id="316273"/>
    <lineage>
        <taxon>Bacteria</taxon>
        <taxon>Pseudomonadati</taxon>
        <taxon>Pseudomonadota</taxon>
        <taxon>Gammaproteobacteria</taxon>
        <taxon>Lysobacterales</taxon>
        <taxon>Lysobacteraceae</taxon>
        <taxon>Xanthomonas</taxon>
    </lineage>
</organism>
<gene>
    <name evidence="1" type="primary">tmk</name>
    <name type="ordered locus">XCV4107</name>
</gene>
<evidence type="ECO:0000255" key="1">
    <source>
        <dbReference type="HAMAP-Rule" id="MF_00165"/>
    </source>
</evidence>
<protein>
    <recommendedName>
        <fullName evidence="1">Thymidylate kinase</fullName>
        <ecNumber evidence="1">2.7.4.9</ecNumber>
    </recommendedName>
    <alternativeName>
        <fullName evidence="1">dTMP kinase</fullName>
    </alternativeName>
</protein>
<feature type="chain" id="PRO_1000023313" description="Thymidylate kinase">
    <location>
        <begin position="1"/>
        <end position="226"/>
    </location>
</feature>
<feature type="binding site" evidence="1">
    <location>
        <begin position="16"/>
        <end position="23"/>
    </location>
    <ligand>
        <name>ATP</name>
        <dbReference type="ChEBI" id="CHEBI:30616"/>
    </ligand>
</feature>
<sequence length="226" mass="23961">MTIELKPGGLLIAIEGIDGAGKTTLARRLATTLDAAGARVVLSKEPTNGPWGTQLRQSAATGRLSAEEEAELLIRDRHEHVDTLIAPALARGDIVILDRYFPSMVAYQGAAGLPLDELLERNAFAPRPDVLLLLDLPPPTGLARIRARGDAPNHFETQDNLERCRTIFAALDLPGKHVVDASADADSVLRQAHAIIVAALADRLSGDAHTDTGKAALELLSGGRPA</sequence>
<dbReference type="EC" id="2.7.4.9" evidence="1"/>
<dbReference type="EMBL" id="AM039952">
    <property type="protein sequence ID" value="CAJ25838.1"/>
    <property type="molecule type" value="Genomic_DNA"/>
</dbReference>
<dbReference type="RefSeq" id="WP_011348915.1">
    <property type="nucleotide sequence ID" value="NZ_CP017190.1"/>
</dbReference>
<dbReference type="SMR" id="Q3BN25"/>
<dbReference type="STRING" id="456327.BJD11_24900"/>
<dbReference type="GeneID" id="97512164"/>
<dbReference type="KEGG" id="xcv:XCV4107"/>
<dbReference type="eggNOG" id="COG0125">
    <property type="taxonomic scope" value="Bacteria"/>
</dbReference>
<dbReference type="HOGENOM" id="CLU_049131_0_2_6"/>
<dbReference type="Proteomes" id="UP000007069">
    <property type="component" value="Chromosome"/>
</dbReference>
<dbReference type="GO" id="GO:0005829">
    <property type="term" value="C:cytosol"/>
    <property type="evidence" value="ECO:0007669"/>
    <property type="project" value="TreeGrafter"/>
</dbReference>
<dbReference type="GO" id="GO:0005524">
    <property type="term" value="F:ATP binding"/>
    <property type="evidence" value="ECO:0007669"/>
    <property type="project" value="UniProtKB-UniRule"/>
</dbReference>
<dbReference type="GO" id="GO:0004798">
    <property type="term" value="F:dTMP kinase activity"/>
    <property type="evidence" value="ECO:0007669"/>
    <property type="project" value="UniProtKB-UniRule"/>
</dbReference>
<dbReference type="GO" id="GO:0006233">
    <property type="term" value="P:dTDP biosynthetic process"/>
    <property type="evidence" value="ECO:0007669"/>
    <property type="project" value="InterPro"/>
</dbReference>
<dbReference type="GO" id="GO:0006235">
    <property type="term" value="P:dTTP biosynthetic process"/>
    <property type="evidence" value="ECO:0007669"/>
    <property type="project" value="UniProtKB-UniRule"/>
</dbReference>
<dbReference type="GO" id="GO:0006227">
    <property type="term" value="P:dUDP biosynthetic process"/>
    <property type="evidence" value="ECO:0007669"/>
    <property type="project" value="TreeGrafter"/>
</dbReference>
<dbReference type="CDD" id="cd01672">
    <property type="entry name" value="TMPK"/>
    <property type="match status" value="1"/>
</dbReference>
<dbReference type="Gene3D" id="3.40.50.300">
    <property type="entry name" value="P-loop containing nucleotide triphosphate hydrolases"/>
    <property type="match status" value="1"/>
</dbReference>
<dbReference type="HAMAP" id="MF_00165">
    <property type="entry name" value="Thymidylate_kinase"/>
    <property type="match status" value="1"/>
</dbReference>
<dbReference type="InterPro" id="IPR027417">
    <property type="entry name" value="P-loop_NTPase"/>
</dbReference>
<dbReference type="InterPro" id="IPR039430">
    <property type="entry name" value="Thymidylate_kin-like_dom"/>
</dbReference>
<dbReference type="InterPro" id="IPR018094">
    <property type="entry name" value="Thymidylate_kinase"/>
</dbReference>
<dbReference type="NCBIfam" id="TIGR00041">
    <property type="entry name" value="DTMP_kinase"/>
    <property type="match status" value="1"/>
</dbReference>
<dbReference type="PANTHER" id="PTHR10344">
    <property type="entry name" value="THYMIDYLATE KINASE"/>
    <property type="match status" value="1"/>
</dbReference>
<dbReference type="PANTHER" id="PTHR10344:SF4">
    <property type="entry name" value="UMP-CMP KINASE 2, MITOCHONDRIAL"/>
    <property type="match status" value="1"/>
</dbReference>
<dbReference type="Pfam" id="PF02223">
    <property type="entry name" value="Thymidylate_kin"/>
    <property type="match status" value="1"/>
</dbReference>
<dbReference type="SUPFAM" id="SSF52540">
    <property type="entry name" value="P-loop containing nucleoside triphosphate hydrolases"/>
    <property type="match status" value="1"/>
</dbReference>
<proteinExistence type="inferred from homology"/>
<keyword id="KW-0067">ATP-binding</keyword>
<keyword id="KW-0418">Kinase</keyword>
<keyword id="KW-0545">Nucleotide biosynthesis</keyword>
<keyword id="KW-0547">Nucleotide-binding</keyword>
<keyword id="KW-0808">Transferase</keyword>
<reference key="1">
    <citation type="journal article" date="2005" name="J. Bacteriol.">
        <title>Insights into genome plasticity and pathogenicity of the plant pathogenic Bacterium Xanthomonas campestris pv. vesicatoria revealed by the complete genome sequence.</title>
        <authorList>
            <person name="Thieme F."/>
            <person name="Koebnik R."/>
            <person name="Bekel T."/>
            <person name="Berger C."/>
            <person name="Boch J."/>
            <person name="Buettner D."/>
            <person name="Caldana C."/>
            <person name="Gaigalat L."/>
            <person name="Goesmann A."/>
            <person name="Kay S."/>
            <person name="Kirchner O."/>
            <person name="Lanz C."/>
            <person name="Linke B."/>
            <person name="McHardy A.C."/>
            <person name="Meyer F."/>
            <person name="Mittenhuber G."/>
            <person name="Nies D.H."/>
            <person name="Niesbach-Kloesgen U."/>
            <person name="Patschkowski T."/>
            <person name="Rueckert C."/>
            <person name="Rupp O."/>
            <person name="Schneiker S."/>
            <person name="Schuster S.C."/>
            <person name="Vorhoelter F.J."/>
            <person name="Weber E."/>
            <person name="Puehler A."/>
            <person name="Bonas U."/>
            <person name="Bartels D."/>
            <person name="Kaiser O."/>
        </authorList>
    </citation>
    <scope>NUCLEOTIDE SEQUENCE [LARGE SCALE GENOMIC DNA]</scope>
    <source>
        <strain>85-10</strain>
    </source>
</reference>
<comment type="function">
    <text evidence="1">Phosphorylation of dTMP to form dTDP in both de novo and salvage pathways of dTTP synthesis.</text>
</comment>
<comment type="catalytic activity">
    <reaction evidence="1">
        <text>dTMP + ATP = dTDP + ADP</text>
        <dbReference type="Rhea" id="RHEA:13517"/>
        <dbReference type="ChEBI" id="CHEBI:30616"/>
        <dbReference type="ChEBI" id="CHEBI:58369"/>
        <dbReference type="ChEBI" id="CHEBI:63528"/>
        <dbReference type="ChEBI" id="CHEBI:456216"/>
        <dbReference type="EC" id="2.7.4.9"/>
    </reaction>
</comment>
<comment type="similarity">
    <text evidence="1">Belongs to the thymidylate kinase family.</text>
</comment>
<name>KTHY_XANE5</name>